<reference key="1">
    <citation type="journal article" date="2013" name="Stand. Genomic Sci.">
        <title>Complete genome sequence of Arthrobacter sp. strain FB24.</title>
        <authorList>
            <person name="Nakatsu C.H."/>
            <person name="Barabote R."/>
            <person name="Thompson S."/>
            <person name="Bruce D."/>
            <person name="Detter C."/>
            <person name="Brettin T."/>
            <person name="Han C."/>
            <person name="Beasley F."/>
            <person name="Chen W."/>
            <person name="Konopka A."/>
            <person name="Xie G."/>
        </authorList>
    </citation>
    <scope>NUCLEOTIDE SEQUENCE [LARGE SCALE GENOMIC DNA]</scope>
    <source>
        <strain>FB24</strain>
    </source>
</reference>
<feature type="chain" id="PRO_1000055340" description="Large ribosomal subunit protein uL13">
    <location>
        <begin position="1"/>
        <end position="147"/>
    </location>
</feature>
<evidence type="ECO:0000255" key="1">
    <source>
        <dbReference type="HAMAP-Rule" id="MF_01366"/>
    </source>
</evidence>
<evidence type="ECO:0000305" key="2"/>
<name>RL13_ARTS2</name>
<gene>
    <name evidence="1" type="primary">rplM</name>
    <name type="ordered locus">Arth_2918</name>
</gene>
<dbReference type="EMBL" id="CP000454">
    <property type="protein sequence ID" value="ABK04297.1"/>
    <property type="molecule type" value="Genomic_DNA"/>
</dbReference>
<dbReference type="RefSeq" id="WP_011692756.1">
    <property type="nucleotide sequence ID" value="NC_008541.1"/>
</dbReference>
<dbReference type="SMR" id="A0JZ27"/>
<dbReference type="STRING" id="290399.Arth_2918"/>
<dbReference type="KEGG" id="art:Arth_2918"/>
<dbReference type="eggNOG" id="COG0102">
    <property type="taxonomic scope" value="Bacteria"/>
</dbReference>
<dbReference type="HOGENOM" id="CLU_082184_2_2_11"/>
<dbReference type="OrthoDB" id="9801330at2"/>
<dbReference type="Proteomes" id="UP000000754">
    <property type="component" value="Chromosome"/>
</dbReference>
<dbReference type="GO" id="GO:0022625">
    <property type="term" value="C:cytosolic large ribosomal subunit"/>
    <property type="evidence" value="ECO:0007669"/>
    <property type="project" value="TreeGrafter"/>
</dbReference>
<dbReference type="GO" id="GO:0003729">
    <property type="term" value="F:mRNA binding"/>
    <property type="evidence" value="ECO:0007669"/>
    <property type="project" value="TreeGrafter"/>
</dbReference>
<dbReference type="GO" id="GO:0003735">
    <property type="term" value="F:structural constituent of ribosome"/>
    <property type="evidence" value="ECO:0007669"/>
    <property type="project" value="InterPro"/>
</dbReference>
<dbReference type="GO" id="GO:0017148">
    <property type="term" value="P:negative regulation of translation"/>
    <property type="evidence" value="ECO:0007669"/>
    <property type="project" value="TreeGrafter"/>
</dbReference>
<dbReference type="GO" id="GO:0006412">
    <property type="term" value="P:translation"/>
    <property type="evidence" value="ECO:0007669"/>
    <property type="project" value="UniProtKB-UniRule"/>
</dbReference>
<dbReference type="CDD" id="cd00392">
    <property type="entry name" value="Ribosomal_L13"/>
    <property type="match status" value="1"/>
</dbReference>
<dbReference type="FunFam" id="3.90.1180.10:FF:000001">
    <property type="entry name" value="50S ribosomal protein L13"/>
    <property type="match status" value="1"/>
</dbReference>
<dbReference type="Gene3D" id="3.90.1180.10">
    <property type="entry name" value="Ribosomal protein L13"/>
    <property type="match status" value="1"/>
</dbReference>
<dbReference type="HAMAP" id="MF_01366">
    <property type="entry name" value="Ribosomal_uL13"/>
    <property type="match status" value="1"/>
</dbReference>
<dbReference type="InterPro" id="IPR005822">
    <property type="entry name" value="Ribosomal_uL13"/>
</dbReference>
<dbReference type="InterPro" id="IPR005823">
    <property type="entry name" value="Ribosomal_uL13_bac-type"/>
</dbReference>
<dbReference type="InterPro" id="IPR036899">
    <property type="entry name" value="Ribosomal_uL13_sf"/>
</dbReference>
<dbReference type="NCBIfam" id="TIGR01066">
    <property type="entry name" value="rplM_bact"/>
    <property type="match status" value="1"/>
</dbReference>
<dbReference type="PANTHER" id="PTHR11545:SF2">
    <property type="entry name" value="LARGE RIBOSOMAL SUBUNIT PROTEIN UL13M"/>
    <property type="match status" value="1"/>
</dbReference>
<dbReference type="PANTHER" id="PTHR11545">
    <property type="entry name" value="RIBOSOMAL PROTEIN L13"/>
    <property type="match status" value="1"/>
</dbReference>
<dbReference type="Pfam" id="PF00572">
    <property type="entry name" value="Ribosomal_L13"/>
    <property type="match status" value="1"/>
</dbReference>
<dbReference type="PIRSF" id="PIRSF002181">
    <property type="entry name" value="Ribosomal_L13"/>
    <property type="match status" value="1"/>
</dbReference>
<dbReference type="SUPFAM" id="SSF52161">
    <property type="entry name" value="Ribosomal protein L13"/>
    <property type="match status" value="1"/>
</dbReference>
<keyword id="KW-1185">Reference proteome</keyword>
<keyword id="KW-0687">Ribonucleoprotein</keyword>
<keyword id="KW-0689">Ribosomal protein</keyword>
<organism>
    <name type="scientific">Arthrobacter sp. (strain FB24)</name>
    <dbReference type="NCBI Taxonomy" id="290399"/>
    <lineage>
        <taxon>Bacteria</taxon>
        <taxon>Bacillati</taxon>
        <taxon>Actinomycetota</taxon>
        <taxon>Actinomycetes</taxon>
        <taxon>Micrococcales</taxon>
        <taxon>Micrococcaceae</taxon>
        <taxon>Arthrobacter</taxon>
    </lineage>
</organism>
<proteinExistence type="inferred from homology"/>
<protein>
    <recommendedName>
        <fullName evidence="1">Large ribosomal subunit protein uL13</fullName>
    </recommendedName>
    <alternativeName>
        <fullName evidence="2">50S ribosomal protein L13</fullName>
    </alternativeName>
</protein>
<comment type="function">
    <text evidence="1">This protein is one of the early assembly proteins of the 50S ribosomal subunit, although it is not seen to bind rRNA by itself. It is important during the early stages of 50S assembly.</text>
</comment>
<comment type="subunit">
    <text evidence="1">Part of the 50S ribosomal subunit.</text>
</comment>
<comment type="similarity">
    <text evidence="1">Belongs to the universal ribosomal protein uL13 family.</text>
</comment>
<accession>A0JZ27</accession>
<sequence>MRTYTPKPGDINRQWHVIDATDVVLGRLASQTAILLRGKHKATFAPHMDMGDFVIIINAEKVALTGAKLEQKRAYRHSGYPGGLTSVNYAELLESNPVRAVEKAIKGMLPKNSLAAQQLGKLKVYRGAEHPHAAQQPKTFEISQVAQ</sequence>